<gene>
    <name evidence="1" type="primary">rpl4</name>
    <name type="ordered locus">VNG_1690G</name>
</gene>
<dbReference type="EMBL" id="AB006961">
    <property type="protein sequence ID" value="BAA22271.1"/>
    <property type="molecule type" value="Genomic_DNA"/>
</dbReference>
<dbReference type="EMBL" id="AE004437">
    <property type="protein sequence ID" value="AAG19937.1"/>
    <property type="molecule type" value="Genomic_DNA"/>
</dbReference>
<dbReference type="PIR" id="E84321">
    <property type="entry name" value="E84321"/>
</dbReference>
<dbReference type="PIR" id="S43421">
    <property type="entry name" value="S43421"/>
</dbReference>
<dbReference type="SMR" id="Q9HPD3"/>
<dbReference type="FunCoup" id="Q9HPD3">
    <property type="interactions" value="151"/>
</dbReference>
<dbReference type="STRING" id="64091.VNG_1690G"/>
<dbReference type="PaxDb" id="64091-VNG_1690G"/>
<dbReference type="KEGG" id="hal:VNG_1690G"/>
<dbReference type="PATRIC" id="fig|64091.14.peg.1289"/>
<dbReference type="HOGENOM" id="CLU_026535_0_0_2"/>
<dbReference type="InParanoid" id="Q9HPD3"/>
<dbReference type="OrthoDB" id="10737at2157"/>
<dbReference type="PhylomeDB" id="Q9HPD3"/>
<dbReference type="Proteomes" id="UP000000554">
    <property type="component" value="Chromosome"/>
</dbReference>
<dbReference type="GO" id="GO:0022625">
    <property type="term" value="C:cytosolic large ribosomal subunit"/>
    <property type="evidence" value="ECO:0000318"/>
    <property type="project" value="GO_Central"/>
</dbReference>
<dbReference type="GO" id="GO:0003723">
    <property type="term" value="F:RNA binding"/>
    <property type="evidence" value="ECO:0000318"/>
    <property type="project" value="GO_Central"/>
</dbReference>
<dbReference type="GO" id="GO:0019843">
    <property type="term" value="F:rRNA binding"/>
    <property type="evidence" value="ECO:0007669"/>
    <property type="project" value="UniProtKB-UniRule"/>
</dbReference>
<dbReference type="GO" id="GO:0003735">
    <property type="term" value="F:structural constituent of ribosome"/>
    <property type="evidence" value="ECO:0000318"/>
    <property type="project" value="GO_Central"/>
</dbReference>
<dbReference type="GO" id="GO:0006412">
    <property type="term" value="P:translation"/>
    <property type="evidence" value="ECO:0007669"/>
    <property type="project" value="UniProtKB-UniRule"/>
</dbReference>
<dbReference type="FunFam" id="3.40.1370.10:FF:000011">
    <property type="entry name" value="50S ribosomal protein L4"/>
    <property type="match status" value="1"/>
</dbReference>
<dbReference type="Gene3D" id="3.40.1370.10">
    <property type="match status" value="1"/>
</dbReference>
<dbReference type="HAMAP" id="MF_01328_A">
    <property type="entry name" value="Ribosomal_uL4_A"/>
    <property type="match status" value="1"/>
</dbReference>
<dbReference type="InterPro" id="IPR002136">
    <property type="entry name" value="Ribosomal_uL4"/>
</dbReference>
<dbReference type="InterPro" id="IPR023574">
    <property type="entry name" value="Ribosomal_uL4_dom_sf"/>
</dbReference>
<dbReference type="InterPro" id="IPR013000">
    <property type="entry name" value="Ribosomal_uL4_euk/arc_CS"/>
</dbReference>
<dbReference type="InterPro" id="IPR045240">
    <property type="entry name" value="Ribosomal_uL4_euk/arch"/>
</dbReference>
<dbReference type="InterPro" id="IPR019970">
    <property type="entry name" value="Ribosomall_uL4-arc"/>
</dbReference>
<dbReference type="NCBIfam" id="TIGR03672">
    <property type="entry name" value="rpl4p_arch"/>
    <property type="match status" value="1"/>
</dbReference>
<dbReference type="PANTHER" id="PTHR19431">
    <property type="entry name" value="60S RIBOSOMAL PROTEIN L4"/>
    <property type="match status" value="1"/>
</dbReference>
<dbReference type="Pfam" id="PF00573">
    <property type="entry name" value="Ribosomal_L4"/>
    <property type="match status" value="1"/>
</dbReference>
<dbReference type="SUPFAM" id="SSF52166">
    <property type="entry name" value="Ribosomal protein L4"/>
    <property type="match status" value="1"/>
</dbReference>
<dbReference type="PROSITE" id="PS00939">
    <property type="entry name" value="RIBOSOMAL_L1E"/>
    <property type="match status" value="1"/>
</dbReference>
<protein>
    <recommendedName>
        <fullName evidence="1">Large ribosomal subunit protein uL4</fullName>
    </recommendedName>
    <alternativeName>
        <fullName evidence="3">50S ribosomal protein L4</fullName>
    </alternativeName>
</protein>
<reference key="1">
    <citation type="journal article" date="1993" name="Biochim. Biophys. Acta">
        <title>Nucleotide sequence of the genes encoding the L3, L4, and L23 equivalent ribosomal proteins from the archaebacterium Halobacterium halobium.</title>
        <authorList>
            <person name="Yuki Y."/>
            <person name="Kanechika R."/>
            <person name="Itoh T."/>
        </authorList>
    </citation>
    <scope>NUCLEOTIDE SEQUENCE [GENOMIC DNA]</scope>
</reference>
<reference key="2">
    <citation type="journal article" date="2000" name="Proc. Natl. Acad. Sci. U.S.A.">
        <title>Genome sequence of Halobacterium species NRC-1.</title>
        <authorList>
            <person name="Ng W.V."/>
            <person name="Kennedy S.P."/>
            <person name="Mahairas G.G."/>
            <person name="Berquist B."/>
            <person name="Pan M."/>
            <person name="Shukla H.D."/>
            <person name="Lasky S.R."/>
            <person name="Baliga N.S."/>
            <person name="Thorsson V."/>
            <person name="Sbrogna J."/>
            <person name="Swartzell S."/>
            <person name="Weir D."/>
            <person name="Hall J."/>
            <person name="Dahl T.A."/>
            <person name="Welti R."/>
            <person name="Goo Y.A."/>
            <person name="Leithauser B."/>
            <person name="Keller K."/>
            <person name="Cruz R."/>
            <person name="Danson M.J."/>
            <person name="Hough D.W."/>
            <person name="Maddocks D.G."/>
            <person name="Jablonski P.E."/>
            <person name="Krebs M.P."/>
            <person name="Angevine C.M."/>
            <person name="Dale H."/>
            <person name="Isenbarger T.A."/>
            <person name="Peck R.F."/>
            <person name="Pohlschroder M."/>
            <person name="Spudich J.L."/>
            <person name="Jung K.-H."/>
            <person name="Alam M."/>
            <person name="Freitas T."/>
            <person name="Hou S."/>
            <person name="Daniels C.J."/>
            <person name="Dennis P.P."/>
            <person name="Omer A.D."/>
            <person name="Ebhardt H."/>
            <person name="Lowe T.M."/>
            <person name="Liang P."/>
            <person name="Riley M."/>
            <person name="Hood L."/>
            <person name="DasSarma S."/>
        </authorList>
    </citation>
    <scope>NUCLEOTIDE SEQUENCE [LARGE SCALE GENOMIC DNA]</scope>
    <source>
        <strain>ATCC 700922 / JCM 11081 / NRC-1</strain>
    </source>
</reference>
<reference key="3">
    <citation type="journal article" date="1984" name="Can. J. Biochem. Cell Biol.">
        <title>Purification, properties, and N-terminal amino acid sequence of certain 50S ribosomal subunit proteins from the archaebacterium Halobacterium cutirubrum.</title>
        <authorList>
            <person name="Matheson A.T."/>
            <person name="Yaguchi M."/>
            <person name="Christensen P."/>
            <person name="Rollin C.F."/>
            <person name="Hasnain S."/>
        </authorList>
    </citation>
    <scope>PROTEIN SEQUENCE OF 1-33</scope>
</reference>
<evidence type="ECO:0000255" key="1">
    <source>
        <dbReference type="HAMAP-Rule" id="MF_01328"/>
    </source>
</evidence>
<evidence type="ECO:0000256" key="2">
    <source>
        <dbReference type="SAM" id="MobiDB-lite"/>
    </source>
</evidence>
<evidence type="ECO:0000305" key="3"/>
<name>RL4_HALSA</name>
<organism>
    <name type="scientific">Halobacterium salinarum (strain ATCC 700922 / JCM 11081 / NRC-1)</name>
    <name type="common">Halobacterium halobium</name>
    <dbReference type="NCBI Taxonomy" id="64091"/>
    <lineage>
        <taxon>Archaea</taxon>
        <taxon>Methanobacteriati</taxon>
        <taxon>Methanobacteriota</taxon>
        <taxon>Stenosarchaea group</taxon>
        <taxon>Halobacteria</taxon>
        <taxon>Halobacteriales</taxon>
        <taxon>Halobacteriaceae</taxon>
        <taxon>Halobacterium</taxon>
        <taxon>Halobacterium salinarum NRC-34001</taxon>
    </lineage>
</organism>
<comment type="function">
    <text evidence="1">One of the primary rRNA binding proteins, this protein initially binds near the 5'-end of the 23S rRNA. It is important during the early stages of 50S assembly. It makes multiple contacts with different domains of the 23S rRNA in the assembled 50S subunit and ribosome.</text>
</comment>
<comment type="function">
    <text evidence="1">Forms part of the polypeptide exit tunnel.</text>
</comment>
<comment type="subunit">
    <text>Part of the 50S ribosomal subunit.</text>
</comment>
<comment type="similarity">
    <text evidence="1">Belongs to the universal ribosomal protein uL4 family.</text>
</comment>
<proteinExistence type="evidence at protein level"/>
<keyword id="KW-0903">Direct protein sequencing</keyword>
<keyword id="KW-1185">Reference proteome</keyword>
<keyword id="KW-0687">Ribonucleoprotein</keyword>
<keyword id="KW-0689">Ribosomal protein</keyword>
<keyword id="KW-0694">RNA-binding</keyword>
<keyword id="KW-0699">rRNA-binding</keyword>
<accession>Q9HPD3</accession>
<accession>P05967</accession>
<accession>Q06845</accession>
<feature type="chain" id="PRO_0000129330" description="Large ribosomal subunit protein uL4">
    <location>
        <begin position="1"/>
        <end position="250"/>
    </location>
</feature>
<feature type="region of interest" description="Disordered" evidence="2">
    <location>
        <begin position="1"/>
        <end position="20"/>
    </location>
</feature>
<feature type="region of interest" description="Disordered" evidence="2">
    <location>
        <begin position="51"/>
        <end position="101"/>
    </location>
</feature>
<feature type="compositionally biased region" description="Basic and acidic residues" evidence="2">
    <location>
        <begin position="92"/>
        <end position="101"/>
    </location>
</feature>
<feature type="sequence conflict" description="In Ref. 1; BAA22271." evidence="3" ref="1">
    <original>EP</original>
    <variation>TN</variation>
    <location>
        <begin position="24"/>
        <end position="25"/>
    </location>
</feature>
<feature type="sequence conflict" description="In Ref. 1; BAA22271." evidence="3" ref="1">
    <original>K</original>
    <variation>N</variation>
    <location>
        <position position="32"/>
    </location>
</feature>
<feature type="sequence conflict" description="In Ref. 1; BAA22271." evidence="3" ref="1">
    <original>ANGQGARVPQTV</original>
    <variation>QTGRVRRAPDSF</variation>
    <location>
        <begin position="73"/>
        <end position="84"/>
    </location>
</feature>
<feature type="sequence conflict" description="In Ref. 1; BAA22271." evidence="3" ref="1">
    <original>HG</original>
    <variation>RS</variation>
    <location>
        <begin position="98"/>
        <end position="99"/>
    </location>
</feature>
<feature type="sequence conflict" description="In Ref. 1; BAA22271." evidence="3" ref="1">
    <original>KA</original>
    <variation>QL</variation>
    <location>
        <begin position="108"/>
        <end position="109"/>
    </location>
</feature>
<feature type="sequence conflict" description="In Ref. 1." evidence="3" ref="1">
    <original>AAVAATTDSELVAD</original>
    <variation>SALLATADHDSELA</variation>
    <location>
        <begin position="113"/>
        <end position="126"/>
    </location>
</feature>
<feature type="sequence conflict" description="In Ref. 1; BAA22271." evidence="3" ref="1">
    <original>GR</original>
    <variation>AA</variation>
    <location>
        <begin position="173"/>
        <end position="174"/>
    </location>
</feature>
<feature type="sequence conflict" description="In Ref. 1; BAA22271." evidence="3" ref="1">
    <original>T</original>
    <variation>E</variation>
    <location>
        <position position="182"/>
    </location>
</feature>
<feature type="sequence conflict" description="In Ref. 1; BAA22271." evidence="3" ref="1">
    <location>
        <position position="207"/>
    </location>
</feature>
<feature type="sequence conflict" description="In Ref. 1; BAA22271." evidence="3" ref="1">
    <original>T</original>
    <variation>S</variation>
    <location>
        <position position="218"/>
    </location>
</feature>
<feature type="sequence conflict" description="In Ref. 1; BAA22271." evidence="3" ref="1">
    <location>
        <position position="231"/>
    </location>
</feature>
<sequence>MQVTVRDLDGDDAGTLDLPRVFEEPVRPDLVKRAVLAAQANRTQEYGADEYAGLRTTAESQGSGRGMAHVPKANGQGARVPQTVGGRKAHPPKAEKDHGLDVNDKERKAAVRAAVAATTDSELVADRGHNFDDDVEFPLVVSDDFEDLVKTQDVVSLLEALGVHADIERADEGRTVRAGQGTLRGRKYQEPTSILFVTASESGPSTAARNLAGVDVATGREVNAEDLAPGAEPGRLTVWTESAVEEVAQR</sequence>